<proteinExistence type="inferred from homology"/>
<feature type="chain" id="PRO_0000345438" description="Small ribosomal subunit protein bS18">
    <location>
        <begin position="1"/>
        <end position="75"/>
    </location>
</feature>
<accession>Q5PBN0</accession>
<reference key="1">
    <citation type="journal article" date="2005" name="Proc. Natl. Acad. Sci. U.S.A.">
        <title>Complete genome sequencing of Anaplasma marginale reveals that the surface is skewed to two superfamilies of outer membrane proteins.</title>
        <authorList>
            <person name="Brayton K.A."/>
            <person name="Kappmeyer L.S."/>
            <person name="Herndon D.R."/>
            <person name="Dark M.J."/>
            <person name="Tibbals D.L."/>
            <person name="Palmer G.H."/>
            <person name="McGuire T.C."/>
            <person name="Knowles D.P. Jr."/>
        </authorList>
    </citation>
    <scope>NUCLEOTIDE SEQUENCE [LARGE SCALE GENOMIC DNA]</scope>
    <source>
        <strain>St. Maries</strain>
    </source>
</reference>
<organism>
    <name type="scientific">Anaplasma marginale (strain St. Maries)</name>
    <dbReference type="NCBI Taxonomy" id="234826"/>
    <lineage>
        <taxon>Bacteria</taxon>
        <taxon>Pseudomonadati</taxon>
        <taxon>Pseudomonadota</taxon>
        <taxon>Alphaproteobacteria</taxon>
        <taxon>Rickettsiales</taxon>
        <taxon>Anaplasmataceae</taxon>
        <taxon>Anaplasma</taxon>
    </lineage>
</organism>
<sequence length="75" mass="8783">MVYLKRPYFRKSRSCPLAQCPDEDIDYKNRALLSKFVSEYGRILPSRITSVSSRKQKLLARAVKRARFLALLPYC</sequence>
<protein>
    <recommendedName>
        <fullName evidence="1">Small ribosomal subunit protein bS18</fullName>
    </recommendedName>
    <alternativeName>
        <fullName evidence="2">30S ribosomal protein S18</fullName>
    </alternativeName>
</protein>
<keyword id="KW-0687">Ribonucleoprotein</keyword>
<keyword id="KW-0689">Ribosomal protein</keyword>
<keyword id="KW-0694">RNA-binding</keyword>
<keyword id="KW-0699">rRNA-binding</keyword>
<comment type="function">
    <text evidence="1">Binds as a heterodimer with protein bS6 to the central domain of the 16S rRNA, where it helps stabilize the platform of the 30S subunit.</text>
</comment>
<comment type="subunit">
    <text evidence="1">Part of the 30S ribosomal subunit. Forms a tight heterodimer with protein bS6.</text>
</comment>
<comment type="similarity">
    <text evidence="1">Belongs to the bacterial ribosomal protein bS18 family.</text>
</comment>
<gene>
    <name evidence="1" type="primary">rpsR</name>
    <name type="ordered locus">AM161.5</name>
</gene>
<name>RS18_ANAMM</name>
<evidence type="ECO:0000255" key="1">
    <source>
        <dbReference type="HAMAP-Rule" id="MF_00270"/>
    </source>
</evidence>
<evidence type="ECO:0000305" key="2"/>
<dbReference type="EMBL" id="CP000030">
    <property type="protein sequence ID" value="AAV86299.1"/>
    <property type="molecule type" value="Genomic_DNA"/>
</dbReference>
<dbReference type="SMR" id="Q5PBN0"/>
<dbReference type="KEGG" id="ama:AM161.5"/>
<dbReference type="HOGENOM" id="CLU_148710_2_1_5"/>
<dbReference type="GO" id="GO:0022627">
    <property type="term" value="C:cytosolic small ribosomal subunit"/>
    <property type="evidence" value="ECO:0007669"/>
    <property type="project" value="TreeGrafter"/>
</dbReference>
<dbReference type="GO" id="GO:0070181">
    <property type="term" value="F:small ribosomal subunit rRNA binding"/>
    <property type="evidence" value="ECO:0007669"/>
    <property type="project" value="TreeGrafter"/>
</dbReference>
<dbReference type="GO" id="GO:0003735">
    <property type="term" value="F:structural constituent of ribosome"/>
    <property type="evidence" value="ECO:0007669"/>
    <property type="project" value="InterPro"/>
</dbReference>
<dbReference type="GO" id="GO:0006412">
    <property type="term" value="P:translation"/>
    <property type="evidence" value="ECO:0007669"/>
    <property type="project" value="UniProtKB-UniRule"/>
</dbReference>
<dbReference type="Gene3D" id="4.10.640.10">
    <property type="entry name" value="Ribosomal protein S18"/>
    <property type="match status" value="1"/>
</dbReference>
<dbReference type="HAMAP" id="MF_00270">
    <property type="entry name" value="Ribosomal_bS18"/>
    <property type="match status" value="1"/>
</dbReference>
<dbReference type="InterPro" id="IPR001648">
    <property type="entry name" value="Ribosomal_bS18"/>
</dbReference>
<dbReference type="InterPro" id="IPR036870">
    <property type="entry name" value="Ribosomal_bS18_sf"/>
</dbReference>
<dbReference type="NCBIfam" id="TIGR00165">
    <property type="entry name" value="S18"/>
    <property type="match status" value="1"/>
</dbReference>
<dbReference type="PANTHER" id="PTHR13479">
    <property type="entry name" value="30S RIBOSOMAL PROTEIN S18"/>
    <property type="match status" value="1"/>
</dbReference>
<dbReference type="PANTHER" id="PTHR13479:SF40">
    <property type="entry name" value="SMALL RIBOSOMAL SUBUNIT PROTEIN BS18M"/>
    <property type="match status" value="1"/>
</dbReference>
<dbReference type="Pfam" id="PF01084">
    <property type="entry name" value="Ribosomal_S18"/>
    <property type="match status" value="1"/>
</dbReference>
<dbReference type="PRINTS" id="PR00974">
    <property type="entry name" value="RIBOSOMALS18"/>
</dbReference>
<dbReference type="SUPFAM" id="SSF46911">
    <property type="entry name" value="Ribosomal protein S18"/>
    <property type="match status" value="1"/>
</dbReference>